<dbReference type="EMBL" id="M25470">
    <property type="protein sequence ID" value="AAA58777.1"/>
    <property type="molecule type" value="Genomic_DNA"/>
</dbReference>
<dbReference type="EMBL" id="M81956">
    <property type="protein sequence ID" value="AAA32424.1"/>
    <property type="molecule type" value="Genomic_DNA"/>
</dbReference>
<dbReference type="EMBL" id="AF234172">
    <property type="protein sequence ID" value="AAQ14007.1"/>
    <property type="molecule type" value="Genomic_DNA"/>
</dbReference>
<dbReference type="PIR" id="JS0460">
    <property type="entry name" value="TPBPP1"/>
</dbReference>
<dbReference type="RefSeq" id="YP_006503.1">
    <property type="nucleotide sequence ID" value="NC_005856.1"/>
</dbReference>
<dbReference type="GeneID" id="2777404"/>
<dbReference type="KEGG" id="vg:2777404"/>
<dbReference type="Proteomes" id="UP000008091">
    <property type="component" value="Genome"/>
</dbReference>
<comment type="function">
    <text>Structural or assembly protein of tail fibers.</text>
</comment>
<name>VGR_BPP1</name>
<accession>P22946</accession>
<reference key="1">
    <citation type="journal article" date="1989" name="Gene">
        <title>Organization of the bacteriophage P1 tail-fibre operon.</title>
        <authorList>
            <person name="Guidolin A."/>
            <person name="Zingg J.-M."/>
            <person name="Arber W."/>
        </authorList>
    </citation>
    <scope>NUCLEOTIDE SEQUENCE [GENOMIC DNA]</scope>
</reference>
<reference key="2">
    <citation type="journal article" date="1992" name="J. Bacteriol.">
        <title>DNA inversion regions Min of plasmid p15B and Cin of bacteriophage P1: evolution of bacteriophage tail fiber genes.</title>
        <authorList>
            <person name="Sandmeier H."/>
            <person name="Iida S."/>
            <person name="Arber W."/>
        </authorList>
    </citation>
    <scope>NUCLEOTIDE SEQUENCE [GENOMIC DNA]</scope>
</reference>
<reference key="3">
    <citation type="journal article" date="2004" name="J. Bacteriol.">
        <title>Genome of bacteriophage P1.</title>
        <authorList>
            <person name="Lobocka M.B."/>
            <person name="Rose D.J."/>
            <person name="Plunkett G. III"/>
            <person name="Rusin M."/>
            <person name="Samojedny A."/>
            <person name="Lehnherr H."/>
            <person name="Yarmolinsky M.B."/>
            <person name="Blattner F.R."/>
        </authorList>
    </citation>
    <scope>NUCLEOTIDE SEQUENCE [LARGE SCALE GENOMIC DNA]</scope>
</reference>
<sequence length="144" mass="15974">MSDVSTNLYKSQLLDYYYQRRAESSINKGSRFLISKAVFGTSSLVTKKGDGTYEIGELPKAFELAELTSQFCTINLVPTYSGGIITVRMDLDQSQLQEGKNYPFNTLVVLDNENKPIAIICVQEDSLYVGKTYTAVMAINTTTA</sequence>
<organismHost>
    <name type="scientific">Enterobacteriaceae</name>
    <dbReference type="NCBI Taxonomy" id="543"/>
</organismHost>
<feature type="chain" id="PRO_0000165286" description="Tail fiber protein R">
    <location>
        <begin position="1"/>
        <end position="144"/>
    </location>
</feature>
<keyword id="KW-1185">Reference proteome</keyword>
<organism>
    <name type="scientific">Escherichia phage P1</name>
    <name type="common">Bacteriophage P1</name>
    <dbReference type="NCBI Taxonomy" id="2886926"/>
    <lineage>
        <taxon>Viruses</taxon>
        <taxon>Duplodnaviria</taxon>
        <taxon>Heunggongvirae</taxon>
        <taxon>Uroviricota</taxon>
        <taxon>Caudoviricetes</taxon>
        <taxon>Punavirus</taxon>
        <taxon>Punavirus P1</taxon>
    </lineage>
</organism>
<protein>
    <recommendedName>
        <fullName>Tail fiber protein R</fullName>
    </recommendedName>
    <alternativeName>
        <fullName>GpR</fullName>
    </alternativeName>
</protein>
<gene>
    <name type="primary">R</name>
</gene>
<proteinExistence type="predicted"/>